<comment type="function">
    <text evidence="1">Part of the Sec protein translocase complex. Interacts with the SecYEG preprotein conducting channel. Has a central role in coupling the hydrolysis of ATP to the transfer of proteins into and across the cell membrane, serving as an ATP-driven molecular motor driving the stepwise translocation of polypeptide chains across the membrane.</text>
</comment>
<comment type="catalytic activity">
    <reaction evidence="1">
        <text>ATP + H2O + cellular proteinSide 1 = ADP + phosphate + cellular proteinSide 2.</text>
        <dbReference type="EC" id="7.4.2.8"/>
    </reaction>
</comment>
<comment type="subunit">
    <text evidence="1">Monomer and homodimer. Part of the essential Sec protein translocation apparatus which comprises SecA, SecYEG and auxiliary proteins SecDF. Other proteins may also be involved.</text>
</comment>
<comment type="subcellular location">
    <subcellularLocation>
        <location evidence="1">Cell membrane</location>
        <topology evidence="1">Peripheral membrane protein</topology>
        <orientation evidence="1">Cytoplasmic side</orientation>
    </subcellularLocation>
    <subcellularLocation>
        <location evidence="1">Cytoplasm</location>
    </subcellularLocation>
    <text evidence="1">Distribution is 50-50.</text>
</comment>
<comment type="similarity">
    <text evidence="1">Belongs to the SecA family.</text>
</comment>
<accession>Q183M9</accession>
<dbReference type="EC" id="7.4.2.8" evidence="1"/>
<dbReference type="EMBL" id="AM180355">
    <property type="protein sequence ID" value="CAJ69680.1"/>
    <property type="molecule type" value="Genomic_DNA"/>
</dbReference>
<dbReference type="RefSeq" id="WP_011861685.1">
    <property type="nucleotide sequence ID" value="NC_009089.1"/>
</dbReference>
<dbReference type="RefSeq" id="YP_001089305.1">
    <property type="nucleotide sequence ID" value="NC_009089.1"/>
</dbReference>
<dbReference type="PDB" id="6SXH">
    <property type="method" value="X-ray"/>
    <property type="resolution" value="2.30 A"/>
    <property type="chains" value="A=1-781"/>
</dbReference>
<dbReference type="PDB" id="6T4H">
    <property type="method" value="X-ray"/>
    <property type="resolution" value="2.90 A"/>
    <property type="chains" value="A=1-781"/>
</dbReference>
<dbReference type="PDBsum" id="6SXH"/>
<dbReference type="PDBsum" id="6T4H"/>
<dbReference type="SMR" id="Q183M9"/>
<dbReference type="STRING" id="272563.CD630_27920"/>
<dbReference type="EnsemblBacteria" id="CAJ69680">
    <property type="protein sequence ID" value="CAJ69680"/>
    <property type="gene ID" value="CD630_27920"/>
</dbReference>
<dbReference type="KEGG" id="cdf:CD630_27920"/>
<dbReference type="KEGG" id="pdc:CDIF630_03055"/>
<dbReference type="PATRIC" id="fig|272563.120.peg.2940"/>
<dbReference type="eggNOG" id="COG0653">
    <property type="taxonomic scope" value="Bacteria"/>
</dbReference>
<dbReference type="OrthoDB" id="9805579at2"/>
<dbReference type="PhylomeDB" id="Q183M9"/>
<dbReference type="BioCyc" id="PDIF272563:G12WB-2951-MONOMER"/>
<dbReference type="Proteomes" id="UP000001978">
    <property type="component" value="Chromosome"/>
</dbReference>
<dbReference type="GO" id="GO:0031522">
    <property type="term" value="C:cell envelope Sec protein transport complex"/>
    <property type="evidence" value="ECO:0007669"/>
    <property type="project" value="TreeGrafter"/>
</dbReference>
<dbReference type="GO" id="GO:0005829">
    <property type="term" value="C:cytosol"/>
    <property type="evidence" value="ECO:0007669"/>
    <property type="project" value="TreeGrafter"/>
</dbReference>
<dbReference type="GO" id="GO:0005886">
    <property type="term" value="C:plasma membrane"/>
    <property type="evidence" value="ECO:0007669"/>
    <property type="project" value="UniProtKB-SubCell"/>
</dbReference>
<dbReference type="GO" id="GO:0005524">
    <property type="term" value="F:ATP binding"/>
    <property type="evidence" value="ECO:0007669"/>
    <property type="project" value="UniProtKB-UniRule"/>
</dbReference>
<dbReference type="GO" id="GO:0008564">
    <property type="term" value="F:protein-exporting ATPase activity"/>
    <property type="evidence" value="ECO:0007669"/>
    <property type="project" value="UniProtKB-EC"/>
</dbReference>
<dbReference type="GO" id="GO:0065002">
    <property type="term" value="P:intracellular protein transmembrane transport"/>
    <property type="evidence" value="ECO:0007669"/>
    <property type="project" value="UniProtKB-UniRule"/>
</dbReference>
<dbReference type="GO" id="GO:0017038">
    <property type="term" value="P:protein import"/>
    <property type="evidence" value="ECO:0007669"/>
    <property type="project" value="InterPro"/>
</dbReference>
<dbReference type="GO" id="GO:0006605">
    <property type="term" value="P:protein targeting"/>
    <property type="evidence" value="ECO:0007669"/>
    <property type="project" value="UniProtKB-UniRule"/>
</dbReference>
<dbReference type="GO" id="GO:0043952">
    <property type="term" value="P:protein transport by the Sec complex"/>
    <property type="evidence" value="ECO:0007669"/>
    <property type="project" value="TreeGrafter"/>
</dbReference>
<dbReference type="CDD" id="cd17928">
    <property type="entry name" value="DEXDc_SecA"/>
    <property type="match status" value="1"/>
</dbReference>
<dbReference type="CDD" id="cd18803">
    <property type="entry name" value="SF2_C_secA"/>
    <property type="match status" value="1"/>
</dbReference>
<dbReference type="FunFam" id="3.40.50.300:FF:000429">
    <property type="entry name" value="Preprotein translocase subunit SecA"/>
    <property type="match status" value="1"/>
</dbReference>
<dbReference type="FunFam" id="3.90.1440.10:FF:000001">
    <property type="entry name" value="Preprotein translocase subunit SecA"/>
    <property type="match status" value="1"/>
</dbReference>
<dbReference type="Gene3D" id="1.10.3060.10">
    <property type="entry name" value="Helical scaffold and wing domains of SecA"/>
    <property type="match status" value="1"/>
</dbReference>
<dbReference type="Gene3D" id="3.40.50.300">
    <property type="entry name" value="P-loop containing nucleotide triphosphate hydrolases"/>
    <property type="match status" value="3"/>
</dbReference>
<dbReference type="Gene3D" id="3.90.1440.10">
    <property type="entry name" value="SecA, preprotein cross-linking domain"/>
    <property type="match status" value="1"/>
</dbReference>
<dbReference type="HAMAP" id="MF_01382">
    <property type="entry name" value="SecA"/>
    <property type="match status" value="1"/>
</dbReference>
<dbReference type="InterPro" id="IPR014001">
    <property type="entry name" value="Helicase_ATP-bd"/>
</dbReference>
<dbReference type="InterPro" id="IPR001650">
    <property type="entry name" value="Helicase_C-like"/>
</dbReference>
<dbReference type="InterPro" id="IPR027417">
    <property type="entry name" value="P-loop_NTPase"/>
</dbReference>
<dbReference type="InterPro" id="IPR000185">
    <property type="entry name" value="SecA"/>
</dbReference>
<dbReference type="InterPro" id="IPR020937">
    <property type="entry name" value="SecA_CS"/>
</dbReference>
<dbReference type="InterPro" id="IPR011115">
    <property type="entry name" value="SecA_DEAD"/>
</dbReference>
<dbReference type="InterPro" id="IPR014018">
    <property type="entry name" value="SecA_motor_DEAD"/>
</dbReference>
<dbReference type="InterPro" id="IPR011130">
    <property type="entry name" value="SecA_preprotein_X-link_dom"/>
</dbReference>
<dbReference type="InterPro" id="IPR044722">
    <property type="entry name" value="SecA_SF2_C"/>
</dbReference>
<dbReference type="InterPro" id="IPR011116">
    <property type="entry name" value="SecA_Wing/Scaffold"/>
</dbReference>
<dbReference type="InterPro" id="IPR036266">
    <property type="entry name" value="SecA_Wing/Scaffold_sf"/>
</dbReference>
<dbReference type="InterPro" id="IPR036670">
    <property type="entry name" value="SecA_X-link_sf"/>
</dbReference>
<dbReference type="NCBIfam" id="NF006630">
    <property type="entry name" value="PRK09200.1"/>
    <property type="match status" value="1"/>
</dbReference>
<dbReference type="NCBIfam" id="NF009538">
    <property type="entry name" value="PRK12904.1"/>
    <property type="match status" value="1"/>
</dbReference>
<dbReference type="NCBIfam" id="TIGR00963">
    <property type="entry name" value="secA"/>
    <property type="match status" value="1"/>
</dbReference>
<dbReference type="PANTHER" id="PTHR30612:SF0">
    <property type="entry name" value="CHLOROPLAST PROTEIN-TRANSPORTING ATPASE"/>
    <property type="match status" value="1"/>
</dbReference>
<dbReference type="PANTHER" id="PTHR30612">
    <property type="entry name" value="SECA INNER MEMBRANE COMPONENT OF SEC PROTEIN SECRETION SYSTEM"/>
    <property type="match status" value="1"/>
</dbReference>
<dbReference type="Pfam" id="PF21090">
    <property type="entry name" value="P-loop_SecA"/>
    <property type="match status" value="2"/>
</dbReference>
<dbReference type="Pfam" id="PF07517">
    <property type="entry name" value="SecA_DEAD"/>
    <property type="match status" value="1"/>
</dbReference>
<dbReference type="Pfam" id="PF01043">
    <property type="entry name" value="SecA_PP_bind"/>
    <property type="match status" value="1"/>
</dbReference>
<dbReference type="Pfam" id="PF07516">
    <property type="entry name" value="SecA_SW"/>
    <property type="match status" value="1"/>
</dbReference>
<dbReference type="PRINTS" id="PR00906">
    <property type="entry name" value="SECA"/>
</dbReference>
<dbReference type="SMART" id="SM00490">
    <property type="entry name" value="HELICc"/>
    <property type="match status" value="1"/>
</dbReference>
<dbReference type="SMART" id="SM00957">
    <property type="entry name" value="SecA_DEAD"/>
    <property type="match status" value="1"/>
</dbReference>
<dbReference type="SMART" id="SM00958">
    <property type="entry name" value="SecA_PP_bind"/>
    <property type="match status" value="1"/>
</dbReference>
<dbReference type="SUPFAM" id="SSF81886">
    <property type="entry name" value="Helical scaffold and wing domains of SecA"/>
    <property type="match status" value="1"/>
</dbReference>
<dbReference type="SUPFAM" id="SSF52540">
    <property type="entry name" value="P-loop containing nucleoside triphosphate hydrolases"/>
    <property type="match status" value="2"/>
</dbReference>
<dbReference type="SUPFAM" id="SSF81767">
    <property type="entry name" value="Pre-protein crosslinking domain of SecA"/>
    <property type="match status" value="1"/>
</dbReference>
<dbReference type="PROSITE" id="PS01312">
    <property type="entry name" value="SECA"/>
    <property type="match status" value="1"/>
</dbReference>
<dbReference type="PROSITE" id="PS51196">
    <property type="entry name" value="SECA_MOTOR_DEAD"/>
    <property type="match status" value="1"/>
</dbReference>
<evidence type="ECO:0000255" key="1">
    <source>
        <dbReference type="HAMAP-Rule" id="MF_01382"/>
    </source>
</evidence>
<evidence type="ECO:0007829" key="2">
    <source>
        <dbReference type="PDB" id="6SXH"/>
    </source>
</evidence>
<evidence type="ECO:0007829" key="3">
    <source>
        <dbReference type="PDB" id="6T4H"/>
    </source>
</evidence>
<proteinExistence type="evidence at protein level"/>
<gene>
    <name evidence="1" type="primary">secA2</name>
    <name type="ordered locus">CD630_27920</name>
</gene>
<name>SECA2_CLOD6</name>
<protein>
    <recommendedName>
        <fullName evidence="1">Protein translocase subunit SecA 2</fullName>
        <ecNumber evidence="1">7.4.2.8</ecNumber>
    </recommendedName>
</protein>
<sequence>MSVIDSILDKADEQEIKKLNVIVDKIDALEDSMKNLSYEELKDMTAIFKNRLKKGETLDDILPEAFAVVREVSKRKLGMRQYRVQLIGGIVIHQGKIAEMKTGEGKTLVEVAPVYLNALTGKGVHVITVNDYLAERDKELMSPVYESLGMTVGVIISNQDPNIRKQQYKCDITYGTNSEFGFDYLRDNMVPDLSHKVQRELNFAIVDEVDSILIDEARTPLIIAGDGDEDLKLYELANSFVKTVKEEDFELDRKDKTIALTASGISKAESFFGITNLTDIKNIELYHHINQALRGHKLMEKDVDYVISNGEVMIVDEFTGRVMDGRRYTDGLHQAIEAKEGVEIKNESKTMATVTYQNFFRLYEKLSGMTGTAKTEEGEFESIYKLNVVQIPTNRPVIRADLHDKVFKTEEEKYSAVVEEIIRIHKTRQPILVGTVSVEKSEKLSKMLKKQGIKHQVLNAKQHDKEAEIISKAGKLDAITIATNMAGRGTDISLGAGDKEEEQEVKDLGGLYVIGTERHESRRIDNQLRGRSGRQGDPGTSRFFVSLEDDVIKLYGGKTIEKLMKRTSSNENTAIESKALTRAIERAQKGVEGKNFEIRKNVLKYDDTINEQRKVIYNERNKVLNDEDIQEDIQKMVKDIIQEAGETYLIGRKRDYYGYFKHLYSTFMPADTLLIPGVDKKSVQEIIDSTYEISKRVYDLKKMMLGIDKVAELEKTVLLKVVDQYWIDHIDAMEQLKQYIGLKSYAQKDPFKEYALEGYDMFEALNKNIREATVQYLYKFN</sequence>
<feature type="chain" id="PRO_0000320779" description="Protein translocase subunit SecA 2">
    <location>
        <begin position="1"/>
        <end position="781"/>
    </location>
</feature>
<feature type="binding site" evidence="1">
    <location>
        <position position="85"/>
    </location>
    <ligand>
        <name>ATP</name>
        <dbReference type="ChEBI" id="CHEBI:30616"/>
    </ligand>
</feature>
<feature type="binding site" evidence="1">
    <location>
        <begin position="103"/>
        <end position="107"/>
    </location>
    <ligand>
        <name>ATP</name>
        <dbReference type="ChEBI" id="CHEBI:30616"/>
    </ligand>
</feature>
<feature type="binding site" evidence="1">
    <location>
        <position position="491"/>
    </location>
    <ligand>
        <name>ATP</name>
        <dbReference type="ChEBI" id="CHEBI:30616"/>
    </ligand>
</feature>
<feature type="helix" evidence="2">
    <location>
        <begin position="14"/>
        <end position="34"/>
    </location>
</feature>
<feature type="helix" evidence="2">
    <location>
        <begin position="38"/>
        <end position="54"/>
    </location>
</feature>
<feature type="helix" evidence="2">
    <location>
        <begin position="58"/>
        <end position="77"/>
    </location>
</feature>
<feature type="helix" evidence="2">
    <location>
        <begin position="83"/>
        <end position="93"/>
    </location>
</feature>
<feature type="strand" evidence="2">
    <location>
        <begin position="96"/>
        <end position="99"/>
    </location>
</feature>
<feature type="helix" evidence="2">
    <location>
        <begin position="106"/>
        <end position="118"/>
    </location>
</feature>
<feature type="strand" evidence="2">
    <location>
        <begin position="125"/>
        <end position="130"/>
    </location>
</feature>
<feature type="helix" evidence="2">
    <location>
        <begin position="131"/>
        <end position="147"/>
    </location>
</feature>
<feature type="strand" evidence="2">
    <location>
        <begin position="152"/>
        <end position="155"/>
    </location>
</feature>
<feature type="helix" evidence="2">
    <location>
        <begin position="161"/>
        <end position="169"/>
    </location>
</feature>
<feature type="strand" evidence="2">
    <location>
        <begin position="170"/>
        <end position="176"/>
    </location>
</feature>
<feature type="helix" evidence="2">
    <location>
        <begin position="177"/>
        <end position="187"/>
    </location>
</feature>
<feature type="helix" evidence="2">
    <location>
        <begin position="193"/>
        <end position="195"/>
    </location>
</feature>
<feature type="strand" evidence="2">
    <location>
        <begin position="203"/>
        <end position="207"/>
    </location>
</feature>
<feature type="helix" evidence="2">
    <location>
        <begin position="209"/>
        <end position="213"/>
    </location>
</feature>
<feature type="turn" evidence="2">
    <location>
        <begin position="214"/>
        <end position="218"/>
    </location>
</feature>
<feature type="strand" evidence="2">
    <location>
        <begin position="220"/>
        <end position="225"/>
    </location>
</feature>
<feature type="helix" evidence="2">
    <location>
        <begin position="229"/>
        <end position="242"/>
    </location>
</feature>
<feature type="helix" evidence="2">
    <location>
        <begin position="246"/>
        <end position="248"/>
    </location>
</feature>
<feature type="strand" evidence="2">
    <location>
        <begin position="249"/>
        <end position="252"/>
    </location>
</feature>
<feature type="turn" evidence="2">
    <location>
        <begin position="253"/>
        <end position="256"/>
    </location>
</feature>
<feature type="strand" evidence="2">
    <location>
        <begin position="257"/>
        <end position="260"/>
    </location>
</feature>
<feature type="helix" evidence="2">
    <location>
        <begin position="262"/>
        <end position="271"/>
    </location>
</feature>
<feature type="helix" evidence="2">
    <location>
        <begin position="280"/>
        <end position="282"/>
    </location>
</feature>
<feature type="helix" evidence="2">
    <location>
        <begin position="283"/>
        <end position="297"/>
    </location>
</feature>
<feature type="turn" evidence="2">
    <location>
        <begin position="301"/>
        <end position="303"/>
    </location>
</feature>
<feature type="strand" evidence="2">
    <location>
        <begin position="304"/>
        <end position="308"/>
    </location>
</feature>
<feature type="strand" evidence="2">
    <location>
        <begin position="311"/>
        <end position="315"/>
    </location>
</feature>
<feature type="turn" evidence="2">
    <location>
        <begin position="317"/>
        <end position="319"/>
    </location>
</feature>
<feature type="strand" evidence="2">
    <location>
        <begin position="322"/>
        <end position="325"/>
    </location>
</feature>
<feature type="helix" evidence="2">
    <location>
        <begin position="332"/>
        <end position="340"/>
    </location>
</feature>
<feature type="strand" evidence="2">
    <location>
        <begin position="349"/>
        <end position="355"/>
    </location>
</feature>
<feature type="helix" evidence="2">
    <location>
        <begin position="356"/>
        <end position="361"/>
    </location>
</feature>
<feature type="strand" evidence="2">
    <location>
        <begin position="363"/>
        <end position="371"/>
    </location>
</feature>
<feature type="helix" evidence="2">
    <location>
        <begin position="374"/>
        <end position="376"/>
    </location>
</feature>
<feature type="helix" evidence="2">
    <location>
        <begin position="377"/>
        <end position="384"/>
    </location>
</feature>
<feature type="strand" evidence="2">
    <location>
        <begin position="388"/>
        <end position="390"/>
    </location>
</feature>
<feature type="strand" evidence="2">
    <location>
        <begin position="405"/>
        <end position="409"/>
    </location>
</feature>
<feature type="helix" evidence="2">
    <location>
        <begin position="410"/>
        <end position="426"/>
    </location>
</feature>
<feature type="strand" evidence="2">
    <location>
        <begin position="431"/>
        <end position="436"/>
    </location>
</feature>
<feature type="helix" evidence="2">
    <location>
        <begin position="438"/>
        <end position="450"/>
    </location>
</feature>
<feature type="strand" evidence="2">
    <location>
        <begin position="456"/>
        <end position="458"/>
    </location>
</feature>
<feature type="helix" evidence="2">
    <location>
        <begin position="463"/>
        <end position="471"/>
    </location>
</feature>
<feature type="turn" evidence="2">
    <location>
        <begin position="472"/>
        <end position="474"/>
    </location>
</feature>
<feature type="strand" evidence="3">
    <location>
        <begin position="475"/>
        <end position="477"/>
    </location>
</feature>
<feature type="strand" evidence="2">
    <location>
        <begin position="479"/>
        <end position="483"/>
    </location>
</feature>
<feature type="turn" evidence="2">
    <location>
        <begin position="494"/>
        <end position="497"/>
    </location>
</feature>
<feature type="helix" evidence="2">
    <location>
        <begin position="499"/>
        <end position="507"/>
    </location>
</feature>
<feature type="strand" evidence="2">
    <location>
        <begin position="510"/>
        <end position="517"/>
    </location>
</feature>
<feature type="helix" evidence="2">
    <location>
        <begin position="522"/>
        <end position="529"/>
    </location>
</feature>
<feature type="helix" evidence="2">
    <location>
        <begin position="534"/>
        <end position="536"/>
    </location>
</feature>
<feature type="strand" evidence="2">
    <location>
        <begin position="539"/>
        <end position="546"/>
    </location>
</feature>
<feature type="helix" evidence="2">
    <location>
        <begin position="550"/>
        <end position="555"/>
    </location>
</feature>
<feature type="helix" evidence="2">
    <location>
        <begin position="558"/>
        <end position="565"/>
    </location>
</feature>
<feature type="helix" evidence="2">
    <location>
        <begin position="578"/>
        <end position="624"/>
    </location>
</feature>
<feature type="helix" evidence="2">
    <location>
        <begin position="630"/>
        <end position="648"/>
    </location>
</feature>
<feature type="turn" evidence="2">
    <location>
        <begin position="649"/>
        <end position="653"/>
    </location>
</feature>
<feature type="helix" evidence="2">
    <location>
        <begin position="656"/>
        <end position="666"/>
    </location>
</feature>
<feature type="strand" evidence="2">
    <location>
        <begin position="679"/>
        <end position="681"/>
    </location>
</feature>
<feature type="helix" evidence="2">
    <location>
        <begin position="683"/>
        <end position="705"/>
    </location>
</feature>
<feature type="helix" evidence="2">
    <location>
        <begin position="707"/>
        <end position="739"/>
    </location>
</feature>
<feature type="strand" evidence="2">
    <location>
        <begin position="746"/>
        <end position="748"/>
    </location>
</feature>
<feature type="helix" evidence="2">
    <location>
        <begin position="750"/>
        <end position="778"/>
    </location>
</feature>
<organism>
    <name type="scientific">Clostridioides difficile (strain 630)</name>
    <name type="common">Peptoclostridium difficile</name>
    <dbReference type="NCBI Taxonomy" id="272563"/>
    <lineage>
        <taxon>Bacteria</taxon>
        <taxon>Bacillati</taxon>
        <taxon>Bacillota</taxon>
        <taxon>Clostridia</taxon>
        <taxon>Peptostreptococcales</taxon>
        <taxon>Peptostreptococcaceae</taxon>
        <taxon>Clostridioides</taxon>
    </lineage>
</organism>
<keyword id="KW-0002">3D-structure</keyword>
<keyword id="KW-0067">ATP-binding</keyword>
<keyword id="KW-1003">Cell membrane</keyword>
<keyword id="KW-0963">Cytoplasm</keyword>
<keyword id="KW-0472">Membrane</keyword>
<keyword id="KW-0547">Nucleotide-binding</keyword>
<keyword id="KW-0653">Protein transport</keyword>
<keyword id="KW-1185">Reference proteome</keyword>
<keyword id="KW-1278">Translocase</keyword>
<keyword id="KW-0811">Translocation</keyword>
<keyword id="KW-0813">Transport</keyword>
<reference key="1">
    <citation type="journal article" date="2006" name="Nat. Genet.">
        <title>The multidrug-resistant human pathogen Clostridium difficile has a highly mobile, mosaic genome.</title>
        <authorList>
            <person name="Sebaihia M."/>
            <person name="Wren B.W."/>
            <person name="Mullany P."/>
            <person name="Fairweather N.F."/>
            <person name="Minton N."/>
            <person name="Stabler R."/>
            <person name="Thomson N.R."/>
            <person name="Roberts A.P."/>
            <person name="Cerdeno-Tarraga A.M."/>
            <person name="Wang H."/>
            <person name="Holden M.T.G."/>
            <person name="Wright A."/>
            <person name="Churcher C."/>
            <person name="Quail M.A."/>
            <person name="Baker S."/>
            <person name="Bason N."/>
            <person name="Brooks K."/>
            <person name="Chillingworth T."/>
            <person name="Cronin A."/>
            <person name="Davis P."/>
            <person name="Dowd L."/>
            <person name="Fraser A."/>
            <person name="Feltwell T."/>
            <person name="Hance Z."/>
            <person name="Holroyd S."/>
            <person name="Jagels K."/>
            <person name="Moule S."/>
            <person name="Mungall K."/>
            <person name="Price C."/>
            <person name="Rabbinowitsch E."/>
            <person name="Sharp S."/>
            <person name="Simmonds M."/>
            <person name="Stevens K."/>
            <person name="Unwin L."/>
            <person name="Whithead S."/>
            <person name="Dupuy B."/>
            <person name="Dougan G."/>
            <person name="Barrell B."/>
            <person name="Parkhill J."/>
        </authorList>
    </citation>
    <scope>NUCLEOTIDE SEQUENCE [LARGE SCALE GENOMIC DNA]</scope>
    <source>
        <strain>630</strain>
    </source>
</reference>